<sequence length="327" mass="35372">MQFIDQANIILKAGKGGNGIVSFRREKFVPAGGPSGGNGGKGGSIILVADNNLQTLLDFKFNREIFAKDGFKGGPNKRSGASGENTILKVPCGTEVRDVHTGIILGDLTIDKQSLTIAHGGRGGHGNAYYLSNQNRAPESFTEGQEGEIWEVQLELKLLAEVGIIGLPNAGKSTLISVLSSARPKIANYPFTTLIPNLGVVRKADGNGCLFADIPGLISGAAEGVGLGHDFLRHIQRTKILIHVIDSIAENPIHDFEIIEKELKQYGNGLLEKERIIVLNKKELIDENYLKIIIKKLENLSKKKVLVISSALREGLPSLLSEVWNRI</sequence>
<dbReference type="EC" id="3.6.5.-" evidence="1"/>
<dbReference type="EMBL" id="CP000552">
    <property type="protein sequence ID" value="ABM71457.1"/>
    <property type="molecule type" value="Genomic_DNA"/>
</dbReference>
<dbReference type="RefSeq" id="WP_011819571.1">
    <property type="nucleotide sequence ID" value="NC_008817.1"/>
</dbReference>
<dbReference type="SMR" id="A2BUJ6"/>
<dbReference type="STRING" id="167542.P9515_02481"/>
<dbReference type="GeneID" id="60200839"/>
<dbReference type="KEGG" id="pmc:P9515_02481"/>
<dbReference type="eggNOG" id="COG0536">
    <property type="taxonomic scope" value="Bacteria"/>
</dbReference>
<dbReference type="HOGENOM" id="CLU_011747_2_0_3"/>
<dbReference type="OrthoDB" id="9807318at2"/>
<dbReference type="Proteomes" id="UP000001589">
    <property type="component" value="Chromosome"/>
</dbReference>
<dbReference type="GO" id="GO:0005737">
    <property type="term" value="C:cytoplasm"/>
    <property type="evidence" value="ECO:0007669"/>
    <property type="project" value="UniProtKB-SubCell"/>
</dbReference>
<dbReference type="GO" id="GO:0005524">
    <property type="term" value="F:ATP binding"/>
    <property type="evidence" value="ECO:0007669"/>
    <property type="project" value="UniProtKB-KW"/>
</dbReference>
<dbReference type="GO" id="GO:0005525">
    <property type="term" value="F:GTP binding"/>
    <property type="evidence" value="ECO:0007669"/>
    <property type="project" value="UniProtKB-UniRule"/>
</dbReference>
<dbReference type="GO" id="GO:0003924">
    <property type="term" value="F:GTPase activity"/>
    <property type="evidence" value="ECO:0007669"/>
    <property type="project" value="UniProtKB-UniRule"/>
</dbReference>
<dbReference type="GO" id="GO:0000287">
    <property type="term" value="F:magnesium ion binding"/>
    <property type="evidence" value="ECO:0007669"/>
    <property type="project" value="InterPro"/>
</dbReference>
<dbReference type="GO" id="GO:0042254">
    <property type="term" value="P:ribosome biogenesis"/>
    <property type="evidence" value="ECO:0007669"/>
    <property type="project" value="UniProtKB-UniRule"/>
</dbReference>
<dbReference type="CDD" id="cd01898">
    <property type="entry name" value="Obg"/>
    <property type="match status" value="1"/>
</dbReference>
<dbReference type="FunFam" id="2.70.210.12:FF:000001">
    <property type="entry name" value="GTPase Obg"/>
    <property type="match status" value="1"/>
</dbReference>
<dbReference type="Gene3D" id="2.70.210.12">
    <property type="entry name" value="GTP1/OBG domain"/>
    <property type="match status" value="1"/>
</dbReference>
<dbReference type="Gene3D" id="3.40.50.300">
    <property type="entry name" value="P-loop containing nucleotide triphosphate hydrolases"/>
    <property type="match status" value="1"/>
</dbReference>
<dbReference type="HAMAP" id="MF_01454">
    <property type="entry name" value="GTPase_Obg"/>
    <property type="match status" value="1"/>
</dbReference>
<dbReference type="InterPro" id="IPR031167">
    <property type="entry name" value="G_OBG"/>
</dbReference>
<dbReference type="InterPro" id="IPR006073">
    <property type="entry name" value="GTP-bd"/>
</dbReference>
<dbReference type="InterPro" id="IPR014100">
    <property type="entry name" value="GTP-bd_Obg/CgtA"/>
</dbReference>
<dbReference type="InterPro" id="IPR006169">
    <property type="entry name" value="GTP1_OBG_dom"/>
</dbReference>
<dbReference type="InterPro" id="IPR036726">
    <property type="entry name" value="GTP1_OBG_dom_sf"/>
</dbReference>
<dbReference type="InterPro" id="IPR045086">
    <property type="entry name" value="OBG_GTPase"/>
</dbReference>
<dbReference type="InterPro" id="IPR027417">
    <property type="entry name" value="P-loop_NTPase"/>
</dbReference>
<dbReference type="NCBIfam" id="TIGR02729">
    <property type="entry name" value="Obg_CgtA"/>
    <property type="match status" value="1"/>
</dbReference>
<dbReference type="NCBIfam" id="NF008955">
    <property type="entry name" value="PRK12297.1"/>
    <property type="match status" value="1"/>
</dbReference>
<dbReference type="NCBIfam" id="NF008956">
    <property type="entry name" value="PRK12299.1"/>
    <property type="match status" value="1"/>
</dbReference>
<dbReference type="PANTHER" id="PTHR11702">
    <property type="entry name" value="DEVELOPMENTALLY REGULATED GTP-BINDING PROTEIN-RELATED"/>
    <property type="match status" value="1"/>
</dbReference>
<dbReference type="PANTHER" id="PTHR11702:SF31">
    <property type="entry name" value="MITOCHONDRIAL RIBOSOME-ASSOCIATED GTPASE 2"/>
    <property type="match status" value="1"/>
</dbReference>
<dbReference type="Pfam" id="PF01018">
    <property type="entry name" value="GTP1_OBG"/>
    <property type="match status" value="1"/>
</dbReference>
<dbReference type="Pfam" id="PF01926">
    <property type="entry name" value="MMR_HSR1"/>
    <property type="match status" value="1"/>
</dbReference>
<dbReference type="PIRSF" id="PIRSF002401">
    <property type="entry name" value="GTP_bd_Obg/CgtA"/>
    <property type="match status" value="1"/>
</dbReference>
<dbReference type="PRINTS" id="PR00326">
    <property type="entry name" value="GTP1OBG"/>
</dbReference>
<dbReference type="SUPFAM" id="SSF82051">
    <property type="entry name" value="Obg GTP-binding protein N-terminal domain"/>
    <property type="match status" value="1"/>
</dbReference>
<dbReference type="SUPFAM" id="SSF52540">
    <property type="entry name" value="P-loop containing nucleoside triphosphate hydrolases"/>
    <property type="match status" value="1"/>
</dbReference>
<dbReference type="PROSITE" id="PS51710">
    <property type="entry name" value="G_OBG"/>
    <property type="match status" value="1"/>
</dbReference>
<dbReference type="PROSITE" id="PS51883">
    <property type="entry name" value="OBG"/>
    <property type="match status" value="1"/>
</dbReference>
<accession>A2BUJ6</accession>
<name>OBG_PROM5</name>
<feature type="chain" id="PRO_0000386139" description="GTPase Obg">
    <location>
        <begin position="1"/>
        <end position="327"/>
    </location>
</feature>
<feature type="domain" description="Obg" evidence="2">
    <location>
        <begin position="1"/>
        <end position="159"/>
    </location>
</feature>
<feature type="domain" description="OBG-type G" evidence="1">
    <location>
        <begin position="160"/>
        <end position="327"/>
    </location>
</feature>
<feature type="binding site" evidence="1">
    <location>
        <begin position="166"/>
        <end position="173"/>
    </location>
    <ligand>
        <name>ATP</name>
        <dbReference type="ChEBI" id="CHEBI:30616"/>
    </ligand>
</feature>
<feature type="binding site" evidence="1">
    <location>
        <position position="173"/>
    </location>
    <ligand>
        <name>Mg(2+)</name>
        <dbReference type="ChEBI" id="CHEBI:18420"/>
    </ligand>
</feature>
<feature type="binding site" evidence="1">
    <location>
        <begin position="191"/>
        <end position="195"/>
    </location>
    <ligand>
        <name>ATP</name>
        <dbReference type="ChEBI" id="CHEBI:30616"/>
    </ligand>
</feature>
<feature type="binding site" evidence="1">
    <location>
        <position position="193"/>
    </location>
    <ligand>
        <name>Mg(2+)</name>
        <dbReference type="ChEBI" id="CHEBI:18420"/>
    </ligand>
</feature>
<feature type="binding site" evidence="1">
    <location>
        <begin position="213"/>
        <end position="216"/>
    </location>
    <ligand>
        <name>ATP</name>
        <dbReference type="ChEBI" id="CHEBI:30616"/>
    </ligand>
</feature>
<feature type="binding site" evidence="1">
    <location>
        <begin position="280"/>
        <end position="283"/>
    </location>
    <ligand>
        <name>ATP</name>
        <dbReference type="ChEBI" id="CHEBI:30616"/>
    </ligand>
</feature>
<feature type="binding site" evidence="1">
    <location>
        <begin position="309"/>
        <end position="311"/>
    </location>
    <ligand>
        <name>ATP</name>
        <dbReference type="ChEBI" id="CHEBI:30616"/>
    </ligand>
</feature>
<protein>
    <recommendedName>
        <fullName evidence="1">GTPase Obg</fullName>
        <ecNumber evidence="1">3.6.5.-</ecNumber>
    </recommendedName>
    <alternativeName>
        <fullName evidence="1">GTP-binding protein Obg</fullName>
    </alternativeName>
</protein>
<proteinExistence type="inferred from homology"/>
<evidence type="ECO:0000255" key="1">
    <source>
        <dbReference type="HAMAP-Rule" id="MF_01454"/>
    </source>
</evidence>
<evidence type="ECO:0000255" key="2">
    <source>
        <dbReference type="PROSITE-ProRule" id="PRU01231"/>
    </source>
</evidence>
<keyword id="KW-0067">ATP-binding</keyword>
<keyword id="KW-0963">Cytoplasm</keyword>
<keyword id="KW-0342">GTP-binding</keyword>
<keyword id="KW-0378">Hydrolase</keyword>
<keyword id="KW-0460">Magnesium</keyword>
<keyword id="KW-0479">Metal-binding</keyword>
<keyword id="KW-0547">Nucleotide-binding</keyword>
<comment type="function">
    <text evidence="1">An essential GTPase which binds GTP, GDP and possibly (p)ppGpp with moderate affinity, with high nucleotide exchange rates and a fairly low GTP hydrolysis rate. Plays a role in control of the cell cycle, stress response, ribosome biogenesis and in those bacteria that undergo differentiation, in morphogenesis control.</text>
</comment>
<comment type="cofactor">
    <cofactor evidence="1">
        <name>Mg(2+)</name>
        <dbReference type="ChEBI" id="CHEBI:18420"/>
    </cofactor>
</comment>
<comment type="subunit">
    <text evidence="1">Monomer.</text>
</comment>
<comment type="subcellular location">
    <subcellularLocation>
        <location evidence="1">Cytoplasm</location>
    </subcellularLocation>
</comment>
<comment type="similarity">
    <text evidence="1">Belongs to the TRAFAC class OBG-HflX-like GTPase superfamily. OBG GTPase family.</text>
</comment>
<gene>
    <name evidence="1" type="primary">obg</name>
    <name type="ordered locus">P9515_02481</name>
</gene>
<organism>
    <name type="scientific">Prochlorococcus marinus (strain MIT 9515)</name>
    <dbReference type="NCBI Taxonomy" id="167542"/>
    <lineage>
        <taxon>Bacteria</taxon>
        <taxon>Bacillati</taxon>
        <taxon>Cyanobacteriota</taxon>
        <taxon>Cyanophyceae</taxon>
        <taxon>Synechococcales</taxon>
        <taxon>Prochlorococcaceae</taxon>
        <taxon>Prochlorococcus</taxon>
    </lineage>
</organism>
<reference key="1">
    <citation type="journal article" date="2007" name="PLoS Genet.">
        <title>Patterns and implications of gene gain and loss in the evolution of Prochlorococcus.</title>
        <authorList>
            <person name="Kettler G.C."/>
            <person name="Martiny A.C."/>
            <person name="Huang K."/>
            <person name="Zucker J."/>
            <person name="Coleman M.L."/>
            <person name="Rodrigue S."/>
            <person name="Chen F."/>
            <person name="Lapidus A."/>
            <person name="Ferriera S."/>
            <person name="Johnson J."/>
            <person name="Steglich C."/>
            <person name="Church G.M."/>
            <person name="Richardson P."/>
            <person name="Chisholm S.W."/>
        </authorList>
    </citation>
    <scope>NUCLEOTIDE SEQUENCE [LARGE SCALE GENOMIC DNA]</scope>
    <source>
        <strain>MIT 9515</strain>
    </source>
</reference>